<accession>Q7VKE3</accession>
<sequence length="123" mass="13487">MIQEQTMLDVADNSGARSVMCIKVLGGSHRRYAAIGDIIKVTVKEAIPRGKVKKGDVLKAVVVRTKKGVRRPDGSVIRFDGNACVILNNNTEQPIGTRIFGPVTRELRSEKFMKIISLAPEVL</sequence>
<dbReference type="EMBL" id="AE017143">
    <property type="protein sequence ID" value="AAP96686.1"/>
    <property type="molecule type" value="Genomic_DNA"/>
</dbReference>
<dbReference type="RefSeq" id="WP_005619403.1">
    <property type="nucleotide sequence ID" value="NC_002940.2"/>
</dbReference>
<dbReference type="SMR" id="Q7VKE3"/>
<dbReference type="STRING" id="233412.HD_1968"/>
<dbReference type="GeneID" id="93298799"/>
<dbReference type="KEGG" id="hdu:HD_1968"/>
<dbReference type="eggNOG" id="COG0093">
    <property type="taxonomic scope" value="Bacteria"/>
</dbReference>
<dbReference type="HOGENOM" id="CLU_095071_2_1_6"/>
<dbReference type="OrthoDB" id="9806379at2"/>
<dbReference type="Proteomes" id="UP000001022">
    <property type="component" value="Chromosome"/>
</dbReference>
<dbReference type="GO" id="GO:0022625">
    <property type="term" value="C:cytosolic large ribosomal subunit"/>
    <property type="evidence" value="ECO:0007669"/>
    <property type="project" value="TreeGrafter"/>
</dbReference>
<dbReference type="GO" id="GO:0070180">
    <property type="term" value="F:large ribosomal subunit rRNA binding"/>
    <property type="evidence" value="ECO:0007669"/>
    <property type="project" value="TreeGrafter"/>
</dbReference>
<dbReference type="GO" id="GO:0003735">
    <property type="term" value="F:structural constituent of ribosome"/>
    <property type="evidence" value="ECO:0007669"/>
    <property type="project" value="InterPro"/>
</dbReference>
<dbReference type="GO" id="GO:0006412">
    <property type="term" value="P:translation"/>
    <property type="evidence" value="ECO:0007669"/>
    <property type="project" value="UniProtKB-UniRule"/>
</dbReference>
<dbReference type="CDD" id="cd00337">
    <property type="entry name" value="Ribosomal_uL14"/>
    <property type="match status" value="1"/>
</dbReference>
<dbReference type="FunFam" id="2.40.150.20:FF:000001">
    <property type="entry name" value="50S ribosomal protein L14"/>
    <property type="match status" value="1"/>
</dbReference>
<dbReference type="Gene3D" id="2.40.150.20">
    <property type="entry name" value="Ribosomal protein L14"/>
    <property type="match status" value="1"/>
</dbReference>
<dbReference type="HAMAP" id="MF_01367">
    <property type="entry name" value="Ribosomal_uL14"/>
    <property type="match status" value="1"/>
</dbReference>
<dbReference type="InterPro" id="IPR000218">
    <property type="entry name" value="Ribosomal_uL14"/>
</dbReference>
<dbReference type="InterPro" id="IPR005745">
    <property type="entry name" value="Ribosomal_uL14_bac-type"/>
</dbReference>
<dbReference type="InterPro" id="IPR019972">
    <property type="entry name" value="Ribosomal_uL14_CS"/>
</dbReference>
<dbReference type="InterPro" id="IPR036853">
    <property type="entry name" value="Ribosomal_uL14_sf"/>
</dbReference>
<dbReference type="NCBIfam" id="TIGR01067">
    <property type="entry name" value="rplN_bact"/>
    <property type="match status" value="1"/>
</dbReference>
<dbReference type="PANTHER" id="PTHR11761">
    <property type="entry name" value="50S/60S RIBOSOMAL PROTEIN L14/L23"/>
    <property type="match status" value="1"/>
</dbReference>
<dbReference type="PANTHER" id="PTHR11761:SF3">
    <property type="entry name" value="LARGE RIBOSOMAL SUBUNIT PROTEIN UL14M"/>
    <property type="match status" value="1"/>
</dbReference>
<dbReference type="Pfam" id="PF00238">
    <property type="entry name" value="Ribosomal_L14"/>
    <property type="match status" value="1"/>
</dbReference>
<dbReference type="SMART" id="SM01374">
    <property type="entry name" value="Ribosomal_L14"/>
    <property type="match status" value="1"/>
</dbReference>
<dbReference type="SUPFAM" id="SSF50193">
    <property type="entry name" value="Ribosomal protein L14"/>
    <property type="match status" value="1"/>
</dbReference>
<dbReference type="PROSITE" id="PS00049">
    <property type="entry name" value="RIBOSOMAL_L14"/>
    <property type="match status" value="1"/>
</dbReference>
<feature type="chain" id="PRO_0000266492" description="Large ribosomal subunit protein uL14">
    <location>
        <begin position="1"/>
        <end position="123"/>
    </location>
</feature>
<organism>
    <name type="scientific">Haemophilus ducreyi (strain 35000HP / ATCC 700724)</name>
    <dbReference type="NCBI Taxonomy" id="233412"/>
    <lineage>
        <taxon>Bacteria</taxon>
        <taxon>Pseudomonadati</taxon>
        <taxon>Pseudomonadota</taxon>
        <taxon>Gammaproteobacteria</taxon>
        <taxon>Pasteurellales</taxon>
        <taxon>Pasteurellaceae</taxon>
        <taxon>Haemophilus</taxon>
    </lineage>
</organism>
<evidence type="ECO:0000255" key="1">
    <source>
        <dbReference type="HAMAP-Rule" id="MF_01367"/>
    </source>
</evidence>
<evidence type="ECO:0000305" key="2"/>
<comment type="function">
    <text evidence="1">Binds to 23S rRNA. Forms part of two intersubunit bridges in the 70S ribosome.</text>
</comment>
<comment type="subunit">
    <text evidence="1">Part of the 50S ribosomal subunit. Forms a cluster with proteins L3 and L19. In the 70S ribosome, L14 and L19 interact and together make contacts with the 16S rRNA in bridges B5 and B8.</text>
</comment>
<comment type="similarity">
    <text evidence="1">Belongs to the universal ribosomal protein uL14 family.</text>
</comment>
<reference key="1">
    <citation type="submission" date="2003-06" db="EMBL/GenBank/DDBJ databases">
        <title>The complete genome sequence of Haemophilus ducreyi.</title>
        <authorList>
            <person name="Munson R.S. Jr."/>
            <person name="Ray W.C."/>
            <person name="Mahairas G."/>
            <person name="Sabo P."/>
            <person name="Mungur R."/>
            <person name="Johnson L."/>
            <person name="Nguyen D."/>
            <person name="Wang J."/>
            <person name="Forst C."/>
            <person name="Hood L."/>
        </authorList>
    </citation>
    <scope>NUCLEOTIDE SEQUENCE [LARGE SCALE GENOMIC DNA]</scope>
    <source>
        <strain>35000HP / ATCC 700724</strain>
    </source>
</reference>
<proteinExistence type="inferred from homology"/>
<name>RL14_HAEDU</name>
<protein>
    <recommendedName>
        <fullName evidence="1">Large ribosomal subunit protein uL14</fullName>
    </recommendedName>
    <alternativeName>
        <fullName evidence="2">50S ribosomal protein L14</fullName>
    </alternativeName>
</protein>
<keyword id="KW-1185">Reference proteome</keyword>
<keyword id="KW-0687">Ribonucleoprotein</keyword>
<keyword id="KW-0689">Ribosomal protein</keyword>
<keyword id="KW-0694">RNA-binding</keyword>
<keyword id="KW-0699">rRNA-binding</keyword>
<gene>
    <name evidence="1" type="primary">rplN</name>
    <name type="ordered locus">HD_1968</name>
</gene>